<feature type="chain" id="PRO_0000169198" description="UPF0381 protein YfcZ">
    <location>
        <begin position="1"/>
        <end position="94"/>
    </location>
</feature>
<name>YFCZ_ECOLI</name>
<dbReference type="EMBL" id="U00096">
    <property type="protein sequence ID" value="AAC75403.2"/>
    <property type="molecule type" value="Genomic_DNA"/>
</dbReference>
<dbReference type="EMBL" id="AP009048">
    <property type="protein sequence ID" value="BAA16198.1"/>
    <property type="molecule type" value="Genomic_DNA"/>
</dbReference>
<dbReference type="PIR" id="E65007">
    <property type="entry name" value="E65007"/>
</dbReference>
<dbReference type="RefSeq" id="NP_416845.2">
    <property type="nucleotide sequence ID" value="NC_000913.3"/>
</dbReference>
<dbReference type="RefSeq" id="WP_001296261.1">
    <property type="nucleotide sequence ID" value="NZ_SSZK01000006.1"/>
</dbReference>
<dbReference type="SMR" id="P0AD33"/>
<dbReference type="BioGRID" id="4260535">
    <property type="interactions" value="26"/>
</dbReference>
<dbReference type="DIP" id="DIP-47925N"/>
<dbReference type="FunCoup" id="P0AD33">
    <property type="interactions" value="229"/>
</dbReference>
<dbReference type="IntAct" id="P0AD33">
    <property type="interactions" value="14"/>
</dbReference>
<dbReference type="STRING" id="511145.b2343"/>
<dbReference type="jPOST" id="P0AD33"/>
<dbReference type="PaxDb" id="511145-b2343"/>
<dbReference type="EnsemblBacteria" id="AAC75403">
    <property type="protein sequence ID" value="AAC75403"/>
    <property type="gene ID" value="b2343"/>
</dbReference>
<dbReference type="GeneID" id="948817"/>
<dbReference type="KEGG" id="ecj:JW2340"/>
<dbReference type="KEGG" id="eco:b2343"/>
<dbReference type="KEGG" id="ecoc:C3026_13040"/>
<dbReference type="PATRIC" id="fig|511145.12.peg.2439"/>
<dbReference type="EchoBASE" id="EB3881"/>
<dbReference type="eggNOG" id="COG3691">
    <property type="taxonomic scope" value="Bacteria"/>
</dbReference>
<dbReference type="HOGENOM" id="CLU_162758_0_0_6"/>
<dbReference type="InParanoid" id="P0AD33"/>
<dbReference type="OMA" id="CQAEAMI"/>
<dbReference type="OrthoDB" id="6198608at2"/>
<dbReference type="PhylomeDB" id="P0AD33"/>
<dbReference type="BioCyc" id="EcoCyc:G7214-MONOMER"/>
<dbReference type="PRO" id="PR:P0AD33"/>
<dbReference type="Proteomes" id="UP000000625">
    <property type="component" value="Chromosome"/>
</dbReference>
<dbReference type="GO" id="GO:0005829">
    <property type="term" value="C:cytosol"/>
    <property type="evidence" value="ECO:0000314"/>
    <property type="project" value="EcoCyc"/>
</dbReference>
<dbReference type="FunFam" id="3.30.70.860:FF:000002">
    <property type="entry name" value="DUF406 family protein"/>
    <property type="match status" value="1"/>
</dbReference>
<dbReference type="Gene3D" id="3.30.70.860">
    <property type="match status" value="1"/>
</dbReference>
<dbReference type="InterPro" id="IPR005272">
    <property type="entry name" value="DUF406"/>
</dbReference>
<dbReference type="InterPro" id="IPR035571">
    <property type="entry name" value="UPF0234-like_C"/>
</dbReference>
<dbReference type="NCBIfam" id="TIGR00743">
    <property type="entry name" value="DUF406 family protein"/>
    <property type="match status" value="1"/>
</dbReference>
<dbReference type="PANTHER" id="PTHR38769">
    <property type="entry name" value="UPF0381 PROTEIN YFCZ-RELATED"/>
    <property type="match status" value="1"/>
</dbReference>
<dbReference type="PANTHER" id="PTHR38769:SF1">
    <property type="entry name" value="UPF0381 PROTEIN YFCZ-RELATED"/>
    <property type="match status" value="1"/>
</dbReference>
<dbReference type="Pfam" id="PF04175">
    <property type="entry name" value="DUF406"/>
    <property type="match status" value="1"/>
</dbReference>
<proteinExistence type="inferred from homology"/>
<gene>
    <name type="primary">yfcZ</name>
    <name type="ordered locus">b2343</name>
    <name type="ordered locus">JW2340</name>
</gene>
<sequence length="94" mass="10318">MSKCSADETPVCCCMDVGTIMDNSDCTASYSRVFANRAEAEQTLAALTEKARSVESEPCKITPTFTEESDGVRLDIDFTFACEAEMLIFQLGLR</sequence>
<reference key="1">
    <citation type="journal article" date="1997" name="DNA Res.">
        <title>Construction of a contiguous 874-kb sequence of the Escherichia coli-K12 genome corresponding to 50.0-68.8 min on the linkage map and analysis of its sequence features.</title>
        <authorList>
            <person name="Yamamoto Y."/>
            <person name="Aiba H."/>
            <person name="Baba T."/>
            <person name="Hayashi K."/>
            <person name="Inada T."/>
            <person name="Isono K."/>
            <person name="Itoh T."/>
            <person name="Kimura S."/>
            <person name="Kitagawa M."/>
            <person name="Makino K."/>
            <person name="Miki T."/>
            <person name="Mitsuhashi N."/>
            <person name="Mizobuchi K."/>
            <person name="Mori H."/>
            <person name="Nakade S."/>
            <person name="Nakamura Y."/>
            <person name="Nashimoto H."/>
            <person name="Oshima T."/>
            <person name="Oyama S."/>
            <person name="Saito N."/>
            <person name="Sampei G."/>
            <person name="Satoh Y."/>
            <person name="Sivasundaram S."/>
            <person name="Tagami H."/>
            <person name="Takahashi H."/>
            <person name="Takeda J."/>
            <person name="Takemoto K."/>
            <person name="Uehara K."/>
            <person name="Wada C."/>
            <person name="Yamagata S."/>
            <person name="Horiuchi T."/>
        </authorList>
    </citation>
    <scope>NUCLEOTIDE SEQUENCE [LARGE SCALE GENOMIC DNA]</scope>
    <source>
        <strain>K12 / W3110 / ATCC 27325 / DSM 5911</strain>
    </source>
</reference>
<reference key="2">
    <citation type="journal article" date="1997" name="Science">
        <title>The complete genome sequence of Escherichia coli K-12.</title>
        <authorList>
            <person name="Blattner F.R."/>
            <person name="Plunkett G. III"/>
            <person name="Bloch C.A."/>
            <person name="Perna N.T."/>
            <person name="Burland V."/>
            <person name="Riley M."/>
            <person name="Collado-Vides J."/>
            <person name="Glasner J.D."/>
            <person name="Rode C.K."/>
            <person name="Mayhew G.F."/>
            <person name="Gregor J."/>
            <person name="Davis N.W."/>
            <person name="Kirkpatrick H.A."/>
            <person name="Goeden M.A."/>
            <person name="Rose D.J."/>
            <person name="Mau B."/>
            <person name="Shao Y."/>
        </authorList>
    </citation>
    <scope>NUCLEOTIDE SEQUENCE [LARGE SCALE GENOMIC DNA]</scope>
    <source>
        <strain>K12 / MG1655 / ATCC 47076</strain>
    </source>
</reference>
<reference key="3">
    <citation type="journal article" date="2006" name="Mol. Syst. Biol.">
        <title>Highly accurate genome sequences of Escherichia coli K-12 strains MG1655 and W3110.</title>
        <authorList>
            <person name="Hayashi K."/>
            <person name="Morooka N."/>
            <person name="Yamamoto Y."/>
            <person name="Fujita K."/>
            <person name="Isono K."/>
            <person name="Choi S."/>
            <person name="Ohtsubo E."/>
            <person name="Baba T."/>
            <person name="Wanner B.L."/>
            <person name="Mori H."/>
            <person name="Horiuchi T."/>
        </authorList>
    </citation>
    <scope>NUCLEOTIDE SEQUENCE [LARGE SCALE GENOMIC DNA]</scope>
    <source>
        <strain>K12 / W3110 / ATCC 27325 / DSM 5911</strain>
    </source>
</reference>
<organism>
    <name type="scientific">Escherichia coli (strain K12)</name>
    <dbReference type="NCBI Taxonomy" id="83333"/>
    <lineage>
        <taxon>Bacteria</taxon>
        <taxon>Pseudomonadati</taxon>
        <taxon>Pseudomonadota</taxon>
        <taxon>Gammaproteobacteria</taxon>
        <taxon>Enterobacterales</taxon>
        <taxon>Enterobacteriaceae</taxon>
        <taxon>Escherichia</taxon>
    </lineage>
</organism>
<evidence type="ECO:0000305" key="1"/>
<protein>
    <recommendedName>
        <fullName>UPF0381 protein YfcZ</fullName>
    </recommendedName>
</protein>
<accession>P0AD33</accession>
<accession>P76504</accession>
<accession>P77331</accession>
<comment type="similarity">
    <text evidence="1">Belongs to the UPF0381 family.</text>
</comment>
<keyword id="KW-1185">Reference proteome</keyword>